<feature type="chain" id="PRO_0000119523" description="Glutamate--tRNA ligase 2">
    <location>
        <begin position="1"/>
        <end position="457"/>
    </location>
</feature>
<feature type="short sequence motif" description="'HIGH' region" evidence="1">
    <location>
        <begin position="9"/>
        <end position="19"/>
    </location>
</feature>
<feature type="short sequence motif" description="'KMSKS' region" evidence="1">
    <location>
        <begin position="250"/>
        <end position="254"/>
    </location>
</feature>
<feature type="binding site" evidence="1">
    <location>
        <position position="253"/>
    </location>
    <ligand>
        <name>ATP</name>
        <dbReference type="ChEBI" id="CHEBI:30616"/>
    </ligand>
</feature>
<protein>
    <recommendedName>
        <fullName evidence="1">Glutamate--tRNA ligase 2</fullName>
        <ecNumber evidence="1">6.1.1.17</ecNumber>
    </recommendedName>
    <alternativeName>
        <fullName evidence="1">Glutamyl-tRNA synthetase 2</fullName>
        <shortName evidence="1">GluRS 2</shortName>
    </alternativeName>
</protein>
<gene>
    <name evidence="1" type="primary">gltX2</name>
    <name type="ordered locus">BMEI0968</name>
</gene>
<dbReference type="EC" id="6.1.1.17" evidence="1"/>
<dbReference type="EMBL" id="AE008917">
    <property type="protein sequence ID" value="AAL52149.1"/>
    <property type="molecule type" value="Genomic_DNA"/>
</dbReference>
<dbReference type="PIR" id="AB3373">
    <property type="entry name" value="AB3373"/>
</dbReference>
<dbReference type="RefSeq" id="WP_004683760.1">
    <property type="nucleotide sequence ID" value="NC_003317.1"/>
</dbReference>
<dbReference type="SMR" id="Q8YH36"/>
<dbReference type="GeneID" id="29593779"/>
<dbReference type="KEGG" id="bme:BMEI0968"/>
<dbReference type="KEGG" id="bmel:DK63_454"/>
<dbReference type="PATRIC" id="fig|224914.52.peg.472"/>
<dbReference type="eggNOG" id="COG0008">
    <property type="taxonomic scope" value="Bacteria"/>
</dbReference>
<dbReference type="eggNOG" id="COG1384">
    <property type="taxonomic scope" value="Bacteria"/>
</dbReference>
<dbReference type="PhylomeDB" id="Q8YH36"/>
<dbReference type="Proteomes" id="UP000000419">
    <property type="component" value="Chromosome I"/>
</dbReference>
<dbReference type="GO" id="GO:0005737">
    <property type="term" value="C:cytoplasm"/>
    <property type="evidence" value="ECO:0007669"/>
    <property type="project" value="UniProtKB-SubCell"/>
</dbReference>
<dbReference type="GO" id="GO:0005524">
    <property type="term" value="F:ATP binding"/>
    <property type="evidence" value="ECO:0007669"/>
    <property type="project" value="UniProtKB-UniRule"/>
</dbReference>
<dbReference type="GO" id="GO:0004818">
    <property type="term" value="F:glutamate-tRNA ligase activity"/>
    <property type="evidence" value="ECO:0007669"/>
    <property type="project" value="UniProtKB-UniRule"/>
</dbReference>
<dbReference type="GO" id="GO:0000049">
    <property type="term" value="F:tRNA binding"/>
    <property type="evidence" value="ECO:0007669"/>
    <property type="project" value="InterPro"/>
</dbReference>
<dbReference type="GO" id="GO:0008270">
    <property type="term" value="F:zinc ion binding"/>
    <property type="evidence" value="ECO:0007669"/>
    <property type="project" value="InterPro"/>
</dbReference>
<dbReference type="GO" id="GO:0006424">
    <property type="term" value="P:glutamyl-tRNA aminoacylation"/>
    <property type="evidence" value="ECO:0007669"/>
    <property type="project" value="UniProtKB-UniRule"/>
</dbReference>
<dbReference type="CDD" id="cd00808">
    <property type="entry name" value="GluRS_core"/>
    <property type="match status" value="1"/>
</dbReference>
<dbReference type="Gene3D" id="1.10.10.350">
    <property type="match status" value="1"/>
</dbReference>
<dbReference type="Gene3D" id="3.40.50.620">
    <property type="entry name" value="HUPs"/>
    <property type="match status" value="1"/>
</dbReference>
<dbReference type="HAMAP" id="MF_00022">
    <property type="entry name" value="Glu_tRNA_synth_type1"/>
    <property type="match status" value="1"/>
</dbReference>
<dbReference type="InterPro" id="IPR045462">
    <property type="entry name" value="aa-tRNA-synth_I_cd-bd"/>
</dbReference>
<dbReference type="InterPro" id="IPR020751">
    <property type="entry name" value="aa-tRNA-synth_I_codon-bd_sub2"/>
</dbReference>
<dbReference type="InterPro" id="IPR001412">
    <property type="entry name" value="aa-tRNA-synth_I_CS"/>
</dbReference>
<dbReference type="InterPro" id="IPR008925">
    <property type="entry name" value="aa_tRNA-synth_I_cd-bd_sf"/>
</dbReference>
<dbReference type="InterPro" id="IPR004527">
    <property type="entry name" value="Glu-tRNA-ligase_bac/mito"/>
</dbReference>
<dbReference type="InterPro" id="IPR000924">
    <property type="entry name" value="Glu/Gln-tRNA-synth"/>
</dbReference>
<dbReference type="InterPro" id="IPR020058">
    <property type="entry name" value="Glu/Gln-tRNA-synth_Ib_cat-dom"/>
</dbReference>
<dbReference type="InterPro" id="IPR049940">
    <property type="entry name" value="GluQ/Sye"/>
</dbReference>
<dbReference type="InterPro" id="IPR033910">
    <property type="entry name" value="GluRS_core"/>
</dbReference>
<dbReference type="InterPro" id="IPR014729">
    <property type="entry name" value="Rossmann-like_a/b/a_fold"/>
</dbReference>
<dbReference type="NCBIfam" id="TIGR00464">
    <property type="entry name" value="gltX_bact"/>
    <property type="match status" value="1"/>
</dbReference>
<dbReference type="PANTHER" id="PTHR43311">
    <property type="entry name" value="GLUTAMATE--TRNA LIGASE"/>
    <property type="match status" value="1"/>
</dbReference>
<dbReference type="PANTHER" id="PTHR43311:SF2">
    <property type="entry name" value="GLUTAMATE--TRNA LIGASE, MITOCHONDRIAL-RELATED"/>
    <property type="match status" value="1"/>
</dbReference>
<dbReference type="Pfam" id="PF19269">
    <property type="entry name" value="Anticodon_2"/>
    <property type="match status" value="1"/>
</dbReference>
<dbReference type="Pfam" id="PF00749">
    <property type="entry name" value="tRNA-synt_1c"/>
    <property type="match status" value="1"/>
</dbReference>
<dbReference type="PRINTS" id="PR00987">
    <property type="entry name" value="TRNASYNTHGLU"/>
</dbReference>
<dbReference type="SUPFAM" id="SSF48163">
    <property type="entry name" value="An anticodon-binding domain of class I aminoacyl-tRNA synthetases"/>
    <property type="match status" value="1"/>
</dbReference>
<dbReference type="SUPFAM" id="SSF52374">
    <property type="entry name" value="Nucleotidylyl transferase"/>
    <property type="match status" value="1"/>
</dbReference>
<dbReference type="PROSITE" id="PS00178">
    <property type="entry name" value="AA_TRNA_LIGASE_I"/>
    <property type="match status" value="1"/>
</dbReference>
<keyword id="KW-0030">Aminoacyl-tRNA synthetase</keyword>
<keyword id="KW-0067">ATP-binding</keyword>
<keyword id="KW-0963">Cytoplasm</keyword>
<keyword id="KW-0436">Ligase</keyword>
<keyword id="KW-0547">Nucleotide-binding</keyword>
<keyword id="KW-0648">Protein biosynthesis</keyword>
<comment type="function">
    <text evidence="1">Catalyzes the attachment of glutamate to tRNA(Glu) in a two-step reaction: glutamate is first activated by ATP to form Glu-AMP and then transferred to the acceptor end of tRNA(Glu).</text>
</comment>
<comment type="catalytic activity">
    <reaction evidence="1">
        <text>tRNA(Glu) + L-glutamate + ATP = L-glutamyl-tRNA(Glu) + AMP + diphosphate</text>
        <dbReference type="Rhea" id="RHEA:23540"/>
        <dbReference type="Rhea" id="RHEA-COMP:9663"/>
        <dbReference type="Rhea" id="RHEA-COMP:9680"/>
        <dbReference type="ChEBI" id="CHEBI:29985"/>
        <dbReference type="ChEBI" id="CHEBI:30616"/>
        <dbReference type="ChEBI" id="CHEBI:33019"/>
        <dbReference type="ChEBI" id="CHEBI:78442"/>
        <dbReference type="ChEBI" id="CHEBI:78520"/>
        <dbReference type="ChEBI" id="CHEBI:456215"/>
        <dbReference type="EC" id="6.1.1.17"/>
    </reaction>
</comment>
<comment type="subunit">
    <text evidence="1">Monomer.</text>
</comment>
<comment type="subcellular location">
    <subcellularLocation>
        <location evidence="1">Cytoplasm</location>
    </subcellularLocation>
</comment>
<comment type="similarity">
    <text evidence="1">Belongs to the class-I aminoacyl-tRNA synthetase family. Glutamate--tRNA ligase type 1 subfamily.</text>
</comment>
<sequence length="457" mass="50848">MTVTVRFAPSPTGYIHIGNTRTALSNWLYASKNNGKFILRYDDTDVERSKDEYAQAIAVDLDWLGVRPDRVEYQSKRFDIYAKAVEKLKTAGLLYACYETADELERRRKLRLARRWPPVYGREALKLTDAEKAALEAEGRKPHWRFLLPNFESDPFATQRTEVHWDDLVRGPQTVDLASMSDPILVREDGTYLYTLPSVVDDIDMGVTHIIRGDDHVTNTGVQISIFKALGATPPVFGHHNLLTTISGEGLSKRTGALSVGSLREAGYEPMAVASLAILIGTSESVTAAPDMAALAEHFDLASISKSSAKFDPSELDALNRSLLHEMPFEKAKPRLEALGICGAKAESFWLAVHGNLDRFSDVSHWWQVVSGDLPEAPDLSGEDRDFVRHAFDLLPPEPWNGQTWKSWTEAVKSATGRKGKNLFMPLRLALTGQAHGPELADLLVLVGLERTKSRRP</sequence>
<organism>
    <name type="scientific">Brucella melitensis biotype 1 (strain ATCC 23456 / CCUG 17765 / NCTC 10094 / 16M)</name>
    <dbReference type="NCBI Taxonomy" id="224914"/>
    <lineage>
        <taxon>Bacteria</taxon>
        <taxon>Pseudomonadati</taxon>
        <taxon>Pseudomonadota</taxon>
        <taxon>Alphaproteobacteria</taxon>
        <taxon>Hyphomicrobiales</taxon>
        <taxon>Brucellaceae</taxon>
        <taxon>Brucella/Ochrobactrum group</taxon>
        <taxon>Brucella</taxon>
    </lineage>
</organism>
<name>SYE2_BRUME</name>
<proteinExistence type="inferred from homology"/>
<evidence type="ECO:0000255" key="1">
    <source>
        <dbReference type="HAMAP-Rule" id="MF_00022"/>
    </source>
</evidence>
<accession>Q8YH36</accession>
<reference key="1">
    <citation type="journal article" date="2002" name="Proc. Natl. Acad. Sci. U.S.A.">
        <title>The genome sequence of the facultative intracellular pathogen Brucella melitensis.</title>
        <authorList>
            <person name="DelVecchio V.G."/>
            <person name="Kapatral V."/>
            <person name="Redkar R.J."/>
            <person name="Patra G."/>
            <person name="Mujer C."/>
            <person name="Los T."/>
            <person name="Ivanova N."/>
            <person name="Anderson I."/>
            <person name="Bhattacharyya A."/>
            <person name="Lykidis A."/>
            <person name="Reznik G."/>
            <person name="Jablonski L."/>
            <person name="Larsen N."/>
            <person name="D'Souza M."/>
            <person name="Bernal A."/>
            <person name="Mazur M."/>
            <person name="Goltsman E."/>
            <person name="Selkov E."/>
            <person name="Elzer P.H."/>
            <person name="Hagius S."/>
            <person name="O'Callaghan D."/>
            <person name="Letesson J.-J."/>
            <person name="Haselkorn R."/>
            <person name="Kyrpides N.C."/>
            <person name="Overbeek R."/>
        </authorList>
    </citation>
    <scope>NUCLEOTIDE SEQUENCE [LARGE SCALE GENOMIC DNA]</scope>
    <source>
        <strain>ATCC 23456 / CCUG 17765 / NCTC 10094 / 16M</strain>
    </source>
</reference>